<reference key="1">
    <citation type="journal article" date="2005" name="Nature">
        <title>Genomic sequence of the pathogenic and allergenic filamentous fungus Aspergillus fumigatus.</title>
        <authorList>
            <person name="Nierman W.C."/>
            <person name="Pain A."/>
            <person name="Anderson M.J."/>
            <person name="Wortman J.R."/>
            <person name="Kim H.S."/>
            <person name="Arroyo J."/>
            <person name="Berriman M."/>
            <person name="Abe K."/>
            <person name="Archer D.B."/>
            <person name="Bermejo C."/>
            <person name="Bennett J.W."/>
            <person name="Bowyer P."/>
            <person name="Chen D."/>
            <person name="Collins M."/>
            <person name="Coulsen R."/>
            <person name="Davies R."/>
            <person name="Dyer P.S."/>
            <person name="Farman M.L."/>
            <person name="Fedorova N."/>
            <person name="Fedorova N.D."/>
            <person name="Feldblyum T.V."/>
            <person name="Fischer R."/>
            <person name="Fosker N."/>
            <person name="Fraser A."/>
            <person name="Garcia J.L."/>
            <person name="Garcia M.J."/>
            <person name="Goble A."/>
            <person name="Goldman G.H."/>
            <person name="Gomi K."/>
            <person name="Griffith-Jones S."/>
            <person name="Gwilliam R."/>
            <person name="Haas B.J."/>
            <person name="Haas H."/>
            <person name="Harris D.E."/>
            <person name="Horiuchi H."/>
            <person name="Huang J."/>
            <person name="Humphray S."/>
            <person name="Jimenez J."/>
            <person name="Keller N."/>
            <person name="Khouri H."/>
            <person name="Kitamoto K."/>
            <person name="Kobayashi T."/>
            <person name="Konzack S."/>
            <person name="Kulkarni R."/>
            <person name="Kumagai T."/>
            <person name="Lafton A."/>
            <person name="Latge J.-P."/>
            <person name="Li W."/>
            <person name="Lord A."/>
            <person name="Lu C."/>
            <person name="Majoros W.H."/>
            <person name="May G.S."/>
            <person name="Miller B.L."/>
            <person name="Mohamoud Y."/>
            <person name="Molina M."/>
            <person name="Monod M."/>
            <person name="Mouyna I."/>
            <person name="Mulligan S."/>
            <person name="Murphy L.D."/>
            <person name="O'Neil S."/>
            <person name="Paulsen I."/>
            <person name="Penalva M.A."/>
            <person name="Pertea M."/>
            <person name="Price C."/>
            <person name="Pritchard B.L."/>
            <person name="Quail M.A."/>
            <person name="Rabbinowitsch E."/>
            <person name="Rawlins N."/>
            <person name="Rajandream M.A."/>
            <person name="Reichard U."/>
            <person name="Renauld H."/>
            <person name="Robson G.D."/>
            <person name="Rodriguez de Cordoba S."/>
            <person name="Rodriguez-Pena J.M."/>
            <person name="Ronning C.M."/>
            <person name="Rutter S."/>
            <person name="Salzberg S.L."/>
            <person name="Sanchez M."/>
            <person name="Sanchez-Ferrero J.C."/>
            <person name="Saunders D."/>
            <person name="Seeger K."/>
            <person name="Squares R."/>
            <person name="Squares S."/>
            <person name="Takeuchi M."/>
            <person name="Tekaia F."/>
            <person name="Turner G."/>
            <person name="Vazquez de Aldana C.R."/>
            <person name="Weidman J."/>
            <person name="White O."/>
            <person name="Woodward J.R."/>
            <person name="Yu J.-H."/>
            <person name="Fraser C.M."/>
            <person name="Galagan J.E."/>
            <person name="Asai K."/>
            <person name="Machida M."/>
            <person name="Hall N."/>
            <person name="Barrell B.G."/>
            <person name="Denning D.W."/>
        </authorList>
    </citation>
    <scope>NUCLEOTIDE SEQUENCE [LARGE SCALE GENOMIC DNA]</scope>
    <source>
        <strain>ATCC MYA-4609 / CBS 101355 / FGSC A1100 / Af293</strain>
    </source>
</reference>
<accession>Q4X261</accession>
<protein>
    <recommendedName>
        <fullName>Mitochondrial inner membrane protease atp23</fullName>
        <ecNumber>3.4.24.-</ecNumber>
    </recommendedName>
</protein>
<comment type="function">
    <text evidence="1">Has a dual role in the assembly of mitochondrial ATPase. Acts as a protease that removes N-terminal residues of mitochondrial ATPase CF(0) subunit 6 at the intermembrane space side. Also involved in the correct assembly of the membrane-embedded ATPase CF(0) particle, probably mediating association of subunit 6 with the subunit 9 ring (By similarity).</text>
</comment>
<comment type="subcellular location">
    <subcellularLocation>
        <location>Mitochondrion inner membrane</location>
        <topology>Peripheral membrane protein</topology>
        <orientation>Intermembrane side</orientation>
    </subcellularLocation>
    <text evidence="1">Associates loosely with the inner membrane.</text>
</comment>
<comment type="similarity">
    <text evidence="4">Belongs to the peptidase M76 family.</text>
</comment>
<comment type="sequence caution" evidence="4">
    <conflict type="erroneous gene model prediction">
        <sequence resource="EMBL-CDS" id="EAL93054"/>
    </conflict>
</comment>
<gene>
    <name type="primary">atp23</name>
    <name type="ORF">AFUA_2G07560</name>
</gene>
<sequence>MSDSQPCSTPSTRGKSDSGYIPGDDTWTQWRNIFAILTGQMTDEGKEQFRIARDIRNEAADCKRCEDQRDYLLQYSPIIRFLSDNIRQLRGDLSSHNIYCRRCTSRKAGGFDPEYGILLCANEMKDQGHLEDTMAHEMVHAYDHLRFKVDWTDNLRHAACTEIRASSLSGECRWAREFFRRGQWKFTQQHQECVRRRAILSVRARPGCKDEAHAEKVVNEVWDSCFRDTRPFDEIYR</sequence>
<name>ATP23_ASPFU</name>
<proteinExistence type="inferred from homology"/>
<dbReference type="EC" id="3.4.24.-"/>
<dbReference type="EMBL" id="AAHF01000001">
    <property type="protein sequence ID" value="EAL93054.1"/>
    <property type="status" value="ALT_SEQ"/>
    <property type="molecule type" value="Genomic_DNA"/>
</dbReference>
<dbReference type="RefSeq" id="XP_755092.1">
    <property type="nucleotide sequence ID" value="XM_749999.1"/>
</dbReference>
<dbReference type="FunCoup" id="Q4X261">
    <property type="interactions" value="485"/>
</dbReference>
<dbReference type="STRING" id="330879.Q4X261"/>
<dbReference type="MEROPS" id="M76.002"/>
<dbReference type="GeneID" id="3513341"/>
<dbReference type="KEGG" id="afm:AFUA_2G07560"/>
<dbReference type="eggNOG" id="KOG3314">
    <property type="taxonomic scope" value="Eukaryota"/>
</dbReference>
<dbReference type="HOGENOM" id="CLU_079125_0_0_1"/>
<dbReference type="InParanoid" id="Q4X261"/>
<dbReference type="OrthoDB" id="285308at2759"/>
<dbReference type="Proteomes" id="UP000002530">
    <property type="component" value="Chromosome 2"/>
</dbReference>
<dbReference type="GO" id="GO:0005743">
    <property type="term" value="C:mitochondrial inner membrane"/>
    <property type="evidence" value="ECO:0007669"/>
    <property type="project" value="UniProtKB-SubCell"/>
</dbReference>
<dbReference type="GO" id="GO:0046872">
    <property type="term" value="F:metal ion binding"/>
    <property type="evidence" value="ECO:0007669"/>
    <property type="project" value="UniProtKB-KW"/>
</dbReference>
<dbReference type="GO" id="GO:0004222">
    <property type="term" value="F:metalloendopeptidase activity"/>
    <property type="evidence" value="ECO:0007669"/>
    <property type="project" value="InterPro"/>
</dbReference>
<dbReference type="GO" id="GO:0034982">
    <property type="term" value="P:mitochondrial protein processing"/>
    <property type="evidence" value="ECO:0000318"/>
    <property type="project" value="GO_Central"/>
</dbReference>
<dbReference type="GO" id="GO:0033615">
    <property type="term" value="P:mitochondrial proton-transporting ATP synthase complex assembly"/>
    <property type="evidence" value="ECO:0000318"/>
    <property type="project" value="GO_Central"/>
</dbReference>
<dbReference type="InterPro" id="IPR019165">
    <property type="entry name" value="Peptidase_M76_ATP23"/>
</dbReference>
<dbReference type="PANTHER" id="PTHR21711">
    <property type="entry name" value="MITOCHONDRIAL INNER MEMBRANE PROTEASE"/>
    <property type="match status" value="1"/>
</dbReference>
<dbReference type="PANTHER" id="PTHR21711:SF0">
    <property type="entry name" value="MITOCHONDRIAL INNER MEMBRANE PROTEASE ATP23 HOMOLOG"/>
    <property type="match status" value="1"/>
</dbReference>
<dbReference type="Pfam" id="PF09768">
    <property type="entry name" value="Peptidase_M76"/>
    <property type="match status" value="1"/>
</dbReference>
<dbReference type="PROSITE" id="PS00142">
    <property type="entry name" value="ZINC_PROTEASE"/>
    <property type="match status" value="1"/>
</dbReference>
<evidence type="ECO:0000250" key="1"/>
<evidence type="ECO:0000255" key="2">
    <source>
        <dbReference type="PROSITE-ProRule" id="PRU10095"/>
    </source>
</evidence>
<evidence type="ECO:0000256" key="3">
    <source>
        <dbReference type="SAM" id="MobiDB-lite"/>
    </source>
</evidence>
<evidence type="ECO:0000305" key="4"/>
<feature type="chain" id="PRO_0000330053" description="Mitochondrial inner membrane protease atp23">
    <location>
        <begin position="1"/>
        <end position="237"/>
    </location>
</feature>
<feature type="region of interest" description="Disordered" evidence="3">
    <location>
        <begin position="1"/>
        <end position="23"/>
    </location>
</feature>
<feature type="compositionally biased region" description="Polar residues" evidence="3">
    <location>
        <begin position="1"/>
        <end position="13"/>
    </location>
</feature>
<feature type="active site" evidence="2">
    <location>
        <position position="137"/>
    </location>
</feature>
<feature type="binding site" evidence="1">
    <location>
        <position position="136"/>
    </location>
    <ligand>
        <name>a divalent metal cation</name>
        <dbReference type="ChEBI" id="CHEBI:60240"/>
        <note>catalytic</note>
    </ligand>
</feature>
<feature type="binding site" evidence="1">
    <location>
        <position position="140"/>
    </location>
    <ligand>
        <name>a divalent metal cation</name>
        <dbReference type="ChEBI" id="CHEBI:60240"/>
        <note>catalytic</note>
    </ligand>
</feature>
<organism>
    <name type="scientific">Aspergillus fumigatus (strain ATCC MYA-4609 / CBS 101355 / FGSC A1100 / Af293)</name>
    <name type="common">Neosartorya fumigata</name>
    <dbReference type="NCBI Taxonomy" id="330879"/>
    <lineage>
        <taxon>Eukaryota</taxon>
        <taxon>Fungi</taxon>
        <taxon>Dikarya</taxon>
        <taxon>Ascomycota</taxon>
        <taxon>Pezizomycotina</taxon>
        <taxon>Eurotiomycetes</taxon>
        <taxon>Eurotiomycetidae</taxon>
        <taxon>Eurotiales</taxon>
        <taxon>Aspergillaceae</taxon>
        <taxon>Aspergillus</taxon>
        <taxon>Aspergillus subgen. Fumigati</taxon>
    </lineage>
</organism>
<keyword id="KW-0378">Hydrolase</keyword>
<keyword id="KW-0472">Membrane</keyword>
<keyword id="KW-0479">Metal-binding</keyword>
<keyword id="KW-0482">Metalloprotease</keyword>
<keyword id="KW-0496">Mitochondrion</keyword>
<keyword id="KW-0999">Mitochondrion inner membrane</keyword>
<keyword id="KW-0645">Protease</keyword>
<keyword id="KW-1185">Reference proteome</keyword>